<gene>
    <name evidence="1" type="primary">lipB</name>
    <name type="ordered locus">APP7_1656</name>
</gene>
<reference key="1">
    <citation type="submission" date="2008-06" db="EMBL/GenBank/DDBJ databases">
        <title>Genome and proteome analysis of A. pleuropneumoniae serotype 7.</title>
        <authorList>
            <person name="Linke B."/>
            <person name="Buettner F."/>
            <person name="Martinez-Arias R."/>
            <person name="Goesmann A."/>
            <person name="Baltes N."/>
            <person name="Tegetmeyer H."/>
            <person name="Singh M."/>
            <person name="Gerlach G.F."/>
        </authorList>
    </citation>
    <scope>NUCLEOTIDE SEQUENCE [LARGE SCALE GENOMIC DNA]</scope>
    <source>
        <strain>AP76</strain>
    </source>
</reference>
<protein>
    <recommendedName>
        <fullName evidence="1">Octanoyltransferase</fullName>
        <ecNumber evidence="1">2.3.1.181</ecNumber>
    </recommendedName>
    <alternativeName>
        <fullName evidence="1">Lipoate-protein ligase B</fullName>
    </alternativeName>
    <alternativeName>
        <fullName evidence="1">Lipoyl/octanoyl transferase</fullName>
    </alternativeName>
    <alternativeName>
        <fullName evidence="1">Octanoyl-[acyl-carrier-protein]-protein N-octanoyltransferase</fullName>
    </alternativeName>
</protein>
<organism>
    <name type="scientific">Actinobacillus pleuropneumoniae serotype 7 (strain AP76)</name>
    <dbReference type="NCBI Taxonomy" id="537457"/>
    <lineage>
        <taxon>Bacteria</taxon>
        <taxon>Pseudomonadati</taxon>
        <taxon>Pseudomonadota</taxon>
        <taxon>Gammaproteobacteria</taxon>
        <taxon>Pasteurellales</taxon>
        <taxon>Pasteurellaceae</taxon>
        <taxon>Actinobacillus</taxon>
    </lineage>
</organism>
<keyword id="KW-0012">Acyltransferase</keyword>
<keyword id="KW-0963">Cytoplasm</keyword>
<keyword id="KW-0808">Transferase</keyword>
<comment type="function">
    <text evidence="1">Catalyzes the transfer of endogenously produced octanoic acid from octanoyl-acyl-carrier-protein onto the lipoyl domains of lipoate-dependent enzymes. Lipoyl-ACP can also act as a substrate although octanoyl-ACP is likely to be the physiological substrate.</text>
</comment>
<comment type="catalytic activity">
    <reaction evidence="1">
        <text>octanoyl-[ACP] + L-lysyl-[protein] = N(6)-octanoyl-L-lysyl-[protein] + holo-[ACP] + H(+)</text>
        <dbReference type="Rhea" id="RHEA:17665"/>
        <dbReference type="Rhea" id="RHEA-COMP:9636"/>
        <dbReference type="Rhea" id="RHEA-COMP:9685"/>
        <dbReference type="Rhea" id="RHEA-COMP:9752"/>
        <dbReference type="Rhea" id="RHEA-COMP:9928"/>
        <dbReference type="ChEBI" id="CHEBI:15378"/>
        <dbReference type="ChEBI" id="CHEBI:29969"/>
        <dbReference type="ChEBI" id="CHEBI:64479"/>
        <dbReference type="ChEBI" id="CHEBI:78463"/>
        <dbReference type="ChEBI" id="CHEBI:78809"/>
        <dbReference type="EC" id="2.3.1.181"/>
    </reaction>
</comment>
<comment type="pathway">
    <text evidence="1">Protein modification; protein lipoylation via endogenous pathway; protein N(6)-(lipoyl)lysine from octanoyl-[acyl-carrier-protein]: step 1/2.</text>
</comment>
<comment type="subcellular location">
    <subcellularLocation>
        <location evidence="1">Cytoplasm</location>
    </subcellularLocation>
</comment>
<comment type="miscellaneous">
    <text evidence="1">In the reaction, the free carboxyl group of octanoic acid is attached via an amide linkage to the epsilon-amino group of a specific lysine residue of lipoyl domains of lipoate-dependent enzymes.</text>
</comment>
<comment type="similarity">
    <text evidence="1">Belongs to the LipB family.</text>
</comment>
<evidence type="ECO:0000255" key="1">
    <source>
        <dbReference type="HAMAP-Rule" id="MF_00013"/>
    </source>
</evidence>
<evidence type="ECO:0000255" key="2">
    <source>
        <dbReference type="PROSITE-ProRule" id="PRU01067"/>
    </source>
</evidence>
<feature type="chain" id="PRO_1000089437" description="Octanoyltransferase">
    <location>
        <begin position="1"/>
        <end position="218"/>
    </location>
</feature>
<feature type="domain" description="BPL/LPL catalytic" evidence="2">
    <location>
        <begin position="30"/>
        <end position="212"/>
    </location>
</feature>
<feature type="active site" description="Acyl-thioester intermediate" evidence="1">
    <location>
        <position position="172"/>
    </location>
</feature>
<feature type="binding site" evidence="1">
    <location>
        <begin position="69"/>
        <end position="76"/>
    </location>
    <ligand>
        <name>substrate</name>
    </ligand>
</feature>
<feature type="binding site" evidence="1">
    <location>
        <begin position="141"/>
        <end position="143"/>
    </location>
    <ligand>
        <name>substrate</name>
    </ligand>
</feature>
<feature type="binding site" evidence="1">
    <location>
        <begin position="154"/>
        <end position="156"/>
    </location>
    <ligand>
        <name>substrate</name>
    </ligand>
</feature>
<feature type="site" description="Lowers pKa of active site Cys" evidence="1">
    <location>
        <position position="138"/>
    </location>
</feature>
<accession>B3H2J1</accession>
<proteinExistence type="inferred from homology"/>
<name>LIPB_ACTP7</name>
<sequence length="218" mass="24532">MNQLIVRQLGVQPYEEIWHQMQDFTDNRNENTADEIWLVQHPSVFTQGSAGKPEHLLNPTNIPVVQTDRGGQITYHGEGQQVMYVLIDIKRLKAQGKDVSVRDLVTALEQCVVKTLADYGIEGYPKPDAPGVYINGKKICSLGLRIRQGRSFHGLAFNVNMDLTPFRNINPCGYAGLEMTQLKDYIAESEAQCDLVSPKLVAHFYNILGYNAQQIINK</sequence>
<dbReference type="EC" id="2.3.1.181" evidence="1"/>
<dbReference type="EMBL" id="CP001091">
    <property type="protein sequence ID" value="ACE62308.1"/>
    <property type="molecule type" value="Genomic_DNA"/>
</dbReference>
<dbReference type="RefSeq" id="WP_005598951.1">
    <property type="nucleotide sequence ID" value="NC_010939.1"/>
</dbReference>
<dbReference type="SMR" id="B3H2J1"/>
<dbReference type="GeneID" id="48599880"/>
<dbReference type="KEGG" id="apa:APP7_1656"/>
<dbReference type="HOGENOM" id="CLU_035168_3_1_6"/>
<dbReference type="UniPathway" id="UPA00538">
    <property type="reaction ID" value="UER00592"/>
</dbReference>
<dbReference type="Proteomes" id="UP000001226">
    <property type="component" value="Chromosome"/>
</dbReference>
<dbReference type="GO" id="GO:0005737">
    <property type="term" value="C:cytoplasm"/>
    <property type="evidence" value="ECO:0007669"/>
    <property type="project" value="UniProtKB-SubCell"/>
</dbReference>
<dbReference type="GO" id="GO:0033819">
    <property type="term" value="F:lipoyl(octanoyl) transferase activity"/>
    <property type="evidence" value="ECO:0007669"/>
    <property type="project" value="UniProtKB-EC"/>
</dbReference>
<dbReference type="GO" id="GO:0036211">
    <property type="term" value="P:protein modification process"/>
    <property type="evidence" value="ECO:0007669"/>
    <property type="project" value="InterPro"/>
</dbReference>
<dbReference type="CDD" id="cd16444">
    <property type="entry name" value="LipB"/>
    <property type="match status" value="1"/>
</dbReference>
<dbReference type="FunFam" id="3.30.930.10:FF:000020">
    <property type="entry name" value="Octanoyltransferase"/>
    <property type="match status" value="1"/>
</dbReference>
<dbReference type="Gene3D" id="3.30.930.10">
    <property type="entry name" value="Bira Bifunctional Protein, Domain 2"/>
    <property type="match status" value="1"/>
</dbReference>
<dbReference type="HAMAP" id="MF_00013">
    <property type="entry name" value="LipB"/>
    <property type="match status" value="1"/>
</dbReference>
<dbReference type="InterPro" id="IPR045864">
    <property type="entry name" value="aa-tRNA-synth_II/BPL/LPL"/>
</dbReference>
<dbReference type="InterPro" id="IPR004143">
    <property type="entry name" value="BPL_LPL_catalytic"/>
</dbReference>
<dbReference type="InterPro" id="IPR000544">
    <property type="entry name" value="Octanoyltransferase"/>
</dbReference>
<dbReference type="InterPro" id="IPR020605">
    <property type="entry name" value="Octanoyltransferase_CS"/>
</dbReference>
<dbReference type="NCBIfam" id="TIGR00214">
    <property type="entry name" value="lipB"/>
    <property type="match status" value="1"/>
</dbReference>
<dbReference type="NCBIfam" id="NF010922">
    <property type="entry name" value="PRK14342.1"/>
    <property type="match status" value="1"/>
</dbReference>
<dbReference type="PANTHER" id="PTHR10993:SF7">
    <property type="entry name" value="LIPOYLTRANSFERASE 2, MITOCHONDRIAL-RELATED"/>
    <property type="match status" value="1"/>
</dbReference>
<dbReference type="PANTHER" id="PTHR10993">
    <property type="entry name" value="OCTANOYLTRANSFERASE"/>
    <property type="match status" value="1"/>
</dbReference>
<dbReference type="Pfam" id="PF21948">
    <property type="entry name" value="LplA-B_cat"/>
    <property type="match status" value="1"/>
</dbReference>
<dbReference type="PIRSF" id="PIRSF016262">
    <property type="entry name" value="LPLase"/>
    <property type="match status" value="1"/>
</dbReference>
<dbReference type="SUPFAM" id="SSF55681">
    <property type="entry name" value="Class II aaRS and biotin synthetases"/>
    <property type="match status" value="1"/>
</dbReference>
<dbReference type="PROSITE" id="PS51733">
    <property type="entry name" value="BPL_LPL_CATALYTIC"/>
    <property type="match status" value="1"/>
</dbReference>
<dbReference type="PROSITE" id="PS01313">
    <property type="entry name" value="LIPB"/>
    <property type="match status" value="1"/>
</dbReference>